<dbReference type="EMBL" id="CP000479">
    <property type="protein sequence ID" value="ABK66009.1"/>
    <property type="molecule type" value="Genomic_DNA"/>
</dbReference>
<dbReference type="RefSeq" id="WP_009979204.1">
    <property type="nucleotide sequence ID" value="NC_008595.1"/>
</dbReference>
<dbReference type="SMR" id="A0QLB6"/>
<dbReference type="KEGG" id="mav:MAV_4575"/>
<dbReference type="HOGENOM" id="CLU_099839_0_0_11"/>
<dbReference type="Proteomes" id="UP000001574">
    <property type="component" value="Chromosome"/>
</dbReference>
<dbReference type="GO" id="GO:0005829">
    <property type="term" value="C:cytosol"/>
    <property type="evidence" value="ECO:0007669"/>
    <property type="project" value="TreeGrafter"/>
</dbReference>
<dbReference type="GO" id="GO:0000166">
    <property type="term" value="F:nucleotide binding"/>
    <property type="evidence" value="ECO:0007669"/>
    <property type="project" value="TreeGrafter"/>
</dbReference>
<dbReference type="CDD" id="cd11740">
    <property type="entry name" value="YajQ_like"/>
    <property type="match status" value="1"/>
</dbReference>
<dbReference type="FunFam" id="3.30.70.860:FF:000004">
    <property type="entry name" value="UPF0234 protein AWC22_11905"/>
    <property type="match status" value="1"/>
</dbReference>
<dbReference type="FunFam" id="3.30.70.990:FF:000003">
    <property type="entry name" value="UPF0234 protein MIP_06774"/>
    <property type="match status" value="1"/>
</dbReference>
<dbReference type="Gene3D" id="3.30.70.860">
    <property type="match status" value="1"/>
</dbReference>
<dbReference type="Gene3D" id="3.30.70.990">
    <property type="entry name" value="YajQ-like, domain 2"/>
    <property type="match status" value="1"/>
</dbReference>
<dbReference type="HAMAP" id="MF_00632">
    <property type="entry name" value="YajQ"/>
    <property type="match status" value="1"/>
</dbReference>
<dbReference type="InterPro" id="IPR007551">
    <property type="entry name" value="DUF520"/>
</dbReference>
<dbReference type="InterPro" id="IPR035571">
    <property type="entry name" value="UPF0234-like_C"/>
</dbReference>
<dbReference type="InterPro" id="IPR035570">
    <property type="entry name" value="UPF0234_N"/>
</dbReference>
<dbReference type="InterPro" id="IPR036183">
    <property type="entry name" value="YajQ-like_sf"/>
</dbReference>
<dbReference type="NCBIfam" id="NF003819">
    <property type="entry name" value="PRK05412.1"/>
    <property type="match status" value="1"/>
</dbReference>
<dbReference type="PANTHER" id="PTHR30476">
    <property type="entry name" value="UPF0234 PROTEIN YAJQ"/>
    <property type="match status" value="1"/>
</dbReference>
<dbReference type="PANTHER" id="PTHR30476:SF0">
    <property type="entry name" value="UPF0234 PROTEIN YAJQ"/>
    <property type="match status" value="1"/>
</dbReference>
<dbReference type="Pfam" id="PF04461">
    <property type="entry name" value="DUF520"/>
    <property type="match status" value="1"/>
</dbReference>
<dbReference type="SUPFAM" id="SSF89963">
    <property type="entry name" value="YajQ-like"/>
    <property type="match status" value="2"/>
</dbReference>
<name>Y4575_MYCA1</name>
<protein>
    <recommendedName>
        <fullName evidence="1">Nucleotide-binding protein MAV_4575</fullName>
    </recommendedName>
</protein>
<organism>
    <name type="scientific">Mycobacterium avium (strain 104)</name>
    <dbReference type="NCBI Taxonomy" id="243243"/>
    <lineage>
        <taxon>Bacteria</taxon>
        <taxon>Bacillati</taxon>
        <taxon>Actinomycetota</taxon>
        <taxon>Actinomycetes</taxon>
        <taxon>Mycobacteriales</taxon>
        <taxon>Mycobacteriaceae</taxon>
        <taxon>Mycobacterium</taxon>
        <taxon>Mycobacterium avium complex (MAC)</taxon>
    </lineage>
</organism>
<evidence type="ECO:0000255" key="1">
    <source>
        <dbReference type="HAMAP-Rule" id="MF_00632"/>
    </source>
</evidence>
<proteinExistence type="inferred from homology"/>
<feature type="chain" id="PRO_1000051739" description="Nucleotide-binding protein MAV_4575">
    <location>
        <begin position="1"/>
        <end position="163"/>
    </location>
</feature>
<accession>A0QLB6</accession>
<reference key="1">
    <citation type="submission" date="2006-10" db="EMBL/GenBank/DDBJ databases">
        <authorList>
            <person name="Fleischmann R.D."/>
            <person name="Dodson R.J."/>
            <person name="Haft D.H."/>
            <person name="Merkel J.S."/>
            <person name="Nelson W.C."/>
            <person name="Fraser C.M."/>
        </authorList>
    </citation>
    <scope>NUCLEOTIDE SEQUENCE [LARGE SCALE GENOMIC DNA]</scope>
    <source>
        <strain>104</strain>
    </source>
</reference>
<keyword id="KW-0547">Nucleotide-binding</keyword>
<sequence>MADSSFDIVSKVDRQEVDNALNQAAKELATRFDFRGTDTTIAWKGDEAIELTSSTEERVKAAVDVFKEKLIRRDISMKAFDAGEPQASGKTYKVNGTLKQGISSENAKKITKLIRDEGPKGVKTQIQGDEIRVSSKKRDDLQAVIAMLKQADLDVALQFVNYR</sequence>
<gene>
    <name type="ordered locus">MAV_4575</name>
</gene>
<comment type="function">
    <text evidence="1">Nucleotide-binding protein.</text>
</comment>
<comment type="similarity">
    <text evidence="1">Belongs to the YajQ family.</text>
</comment>